<gene>
    <name evidence="1" type="primary">rpsI</name>
    <name type="ordered locus">FP0455</name>
</gene>
<proteinExistence type="inferred from homology"/>
<evidence type="ECO:0000255" key="1">
    <source>
        <dbReference type="HAMAP-Rule" id="MF_00532"/>
    </source>
</evidence>
<evidence type="ECO:0000305" key="2"/>
<name>RS9_FLAPJ</name>
<dbReference type="EMBL" id="AM398681">
    <property type="protein sequence ID" value="CAL42566.1"/>
    <property type="molecule type" value="Genomic_DNA"/>
</dbReference>
<dbReference type="RefSeq" id="WP_011962624.1">
    <property type="nucleotide sequence ID" value="NC_009613.3"/>
</dbReference>
<dbReference type="RefSeq" id="YP_001295384.1">
    <property type="nucleotide sequence ID" value="NC_009613.3"/>
</dbReference>
<dbReference type="SMR" id="A6GWU3"/>
<dbReference type="STRING" id="402612.FP0455"/>
<dbReference type="EnsemblBacteria" id="CAL42566">
    <property type="protein sequence ID" value="CAL42566"/>
    <property type="gene ID" value="FP0455"/>
</dbReference>
<dbReference type="GeneID" id="66551593"/>
<dbReference type="KEGG" id="fps:FP0455"/>
<dbReference type="PATRIC" id="fig|402612.5.peg.470"/>
<dbReference type="eggNOG" id="COG0103">
    <property type="taxonomic scope" value="Bacteria"/>
</dbReference>
<dbReference type="HOGENOM" id="CLU_046483_2_1_10"/>
<dbReference type="OrthoDB" id="9803965at2"/>
<dbReference type="Proteomes" id="UP000006394">
    <property type="component" value="Chromosome"/>
</dbReference>
<dbReference type="GO" id="GO:0022627">
    <property type="term" value="C:cytosolic small ribosomal subunit"/>
    <property type="evidence" value="ECO:0007669"/>
    <property type="project" value="TreeGrafter"/>
</dbReference>
<dbReference type="GO" id="GO:0003723">
    <property type="term" value="F:RNA binding"/>
    <property type="evidence" value="ECO:0007669"/>
    <property type="project" value="TreeGrafter"/>
</dbReference>
<dbReference type="GO" id="GO:0003735">
    <property type="term" value="F:structural constituent of ribosome"/>
    <property type="evidence" value="ECO:0007669"/>
    <property type="project" value="InterPro"/>
</dbReference>
<dbReference type="GO" id="GO:0006412">
    <property type="term" value="P:translation"/>
    <property type="evidence" value="ECO:0007669"/>
    <property type="project" value="UniProtKB-UniRule"/>
</dbReference>
<dbReference type="FunFam" id="3.30.230.10:FF:000001">
    <property type="entry name" value="30S ribosomal protein S9"/>
    <property type="match status" value="1"/>
</dbReference>
<dbReference type="Gene3D" id="3.30.230.10">
    <property type="match status" value="1"/>
</dbReference>
<dbReference type="HAMAP" id="MF_00532_B">
    <property type="entry name" value="Ribosomal_uS9_B"/>
    <property type="match status" value="1"/>
</dbReference>
<dbReference type="InterPro" id="IPR020568">
    <property type="entry name" value="Ribosomal_Su5_D2-typ_SF"/>
</dbReference>
<dbReference type="InterPro" id="IPR000754">
    <property type="entry name" value="Ribosomal_uS9"/>
</dbReference>
<dbReference type="InterPro" id="IPR023035">
    <property type="entry name" value="Ribosomal_uS9_bac/plastid"/>
</dbReference>
<dbReference type="InterPro" id="IPR014721">
    <property type="entry name" value="Ribsml_uS5_D2-typ_fold_subgr"/>
</dbReference>
<dbReference type="NCBIfam" id="NF001099">
    <property type="entry name" value="PRK00132.1"/>
    <property type="match status" value="1"/>
</dbReference>
<dbReference type="PANTHER" id="PTHR21569">
    <property type="entry name" value="RIBOSOMAL PROTEIN S9"/>
    <property type="match status" value="1"/>
</dbReference>
<dbReference type="PANTHER" id="PTHR21569:SF1">
    <property type="entry name" value="SMALL RIBOSOMAL SUBUNIT PROTEIN US9M"/>
    <property type="match status" value="1"/>
</dbReference>
<dbReference type="Pfam" id="PF00380">
    <property type="entry name" value="Ribosomal_S9"/>
    <property type="match status" value="1"/>
</dbReference>
<dbReference type="SUPFAM" id="SSF54211">
    <property type="entry name" value="Ribosomal protein S5 domain 2-like"/>
    <property type="match status" value="1"/>
</dbReference>
<organism>
    <name type="scientific">Flavobacterium psychrophilum (strain ATCC 49511 / DSM 21280 / CIP 103535 / JIP02/86)</name>
    <dbReference type="NCBI Taxonomy" id="402612"/>
    <lineage>
        <taxon>Bacteria</taxon>
        <taxon>Pseudomonadati</taxon>
        <taxon>Bacteroidota</taxon>
        <taxon>Flavobacteriia</taxon>
        <taxon>Flavobacteriales</taxon>
        <taxon>Flavobacteriaceae</taxon>
        <taxon>Flavobacterium</taxon>
    </lineage>
</organism>
<feature type="chain" id="PRO_1000128128" description="Small ribosomal subunit protein uS9">
    <location>
        <begin position="1"/>
        <end position="128"/>
    </location>
</feature>
<accession>A6GWU3</accession>
<sequence>MAAIHKIGRRKCAVARVYVSEGTGVITVNKKAFATYFPTATLQYKVLQPMSMTENVTNYDVKVNVYGGGSTGQAEAVRMALARVMCEVGEGNRAILKPEGLLTRDPRMVERKKFGQKKARKRFQFSKR</sequence>
<comment type="similarity">
    <text evidence="1">Belongs to the universal ribosomal protein uS9 family.</text>
</comment>
<protein>
    <recommendedName>
        <fullName evidence="1">Small ribosomal subunit protein uS9</fullName>
    </recommendedName>
    <alternativeName>
        <fullName evidence="2">30S ribosomal protein S9</fullName>
    </alternativeName>
</protein>
<reference key="1">
    <citation type="journal article" date="2007" name="Nat. Biotechnol.">
        <title>Complete genome sequence of the fish pathogen Flavobacterium psychrophilum.</title>
        <authorList>
            <person name="Duchaud E."/>
            <person name="Boussaha M."/>
            <person name="Loux V."/>
            <person name="Bernardet J.-F."/>
            <person name="Michel C."/>
            <person name="Kerouault B."/>
            <person name="Mondot S."/>
            <person name="Nicolas P."/>
            <person name="Bossy R."/>
            <person name="Caron C."/>
            <person name="Bessieres P."/>
            <person name="Gibrat J.-F."/>
            <person name="Claverol S."/>
            <person name="Dumetz F."/>
            <person name="Le Henaff M."/>
            <person name="Benmansour A."/>
        </authorList>
    </citation>
    <scope>NUCLEOTIDE SEQUENCE [LARGE SCALE GENOMIC DNA]</scope>
    <source>
        <strain>ATCC 49511 / DSM 21280 / CIP 103535 / JIP02/86</strain>
    </source>
</reference>
<keyword id="KW-1185">Reference proteome</keyword>
<keyword id="KW-0687">Ribonucleoprotein</keyword>
<keyword id="KW-0689">Ribosomal protein</keyword>